<reference key="1">
    <citation type="submission" date="2006-06" db="EMBL/GenBank/DDBJ databases">
        <title>Complete sequence of Pseudoalteromonas atlantica T6c.</title>
        <authorList>
            <consortium name="US DOE Joint Genome Institute"/>
            <person name="Copeland A."/>
            <person name="Lucas S."/>
            <person name="Lapidus A."/>
            <person name="Barry K."/>
            <person name="Detter J.C."/>
            <person name="Glavina del Rio T."/>
            <person name="Hammon N."/>
            <person name="Israni S."/>
            <person name="Dalin E."/>
            <person name="Tice H."/>
            <person name="Pitluck S."/>
            <person name="Saunders E."/>
            <person name="Brettin T."/>
            <person name="Bruce D."/>
            <person name="Han C."/>
            <person name="Tapia R."/>
            <person name="Gilna P."/>
            <person name="Schmutz J."/>
            <person name="Larimer F."/>
            <person name="Land M."/>
            <person name="Hauser L."/>
            <person name="Kyrpides N."/>
            <person name="Kim E."/>
            <person name="Karls A.C."/>
            <person name="Bartlett D."/>
            <person name="Higgins B.P."/>
            <person name="Richardson P."/>
        </authorList>
    </citation>
    <scope>NUCLEOTIDE SEQUENCE [LARGE SCALE GENOMIC DNA]</scope>
    <source>
        <strain>T6c / ATCC BAA-1087</strain>
    </source>
</reference>
<name>TRMN6_PSEA6</name>
<protein>
    <recommendedName>
        <fullName evidence="1">tRNA1(Val) (adenine(37)-N6)-methyltransferase</fullName>
        <ecNumber evidence="1">2.1.1.223</ecNumber>
    </recommendedName>
    <alternativeName>
        <fullName evidence="1">tRNA m6A37 methyltransferase</fullName>
    </alternativeName>
</protein>
<dbReference type="EC" id="2.1.1.223" evidence="1"/>
<dbReference type="EMBL" id="CP000388">
    <property type="protein sequence ID" value="ABG42470.1"/>
    <property type="molecule type" value="Genomic_DNA"/>
</dbReference>
<dbReference type="RefSeq" id="WP_011576673.1">
    <property type="nucleotide sequence ID" value="NC_008228.1"/>
</dbReference>
<dbReference type="SMR" id="Q15NR8"/>
<dbReference type="STRING" id="342610.Patl_3970"/>
<dbReference type="KEGG" id="pat:Patl_3970"/>
<dbReference type="eggNOG" id="COG4123">
    <property type="taxonomic scope" value="Bacteria"/>
</dbReference>
<dbReference type="HOGENOM" id="CLU_061983_0_0_6"/>
<dbReference type="OrthoDB" id="5383291at2"/>
<dbReference type="Proteomes" id="UP000001981">
    <property type="component" value="Chromosome"/>
</dbReference>
<dbReference type="GO" id="GO:0005737">
    <property type="term" value="C:cytoplasm"/>
    <property type="evidence" value="ECO:0007669"/>
    <property type="project" value="UniProtKB-SubCell"/>
</dbReference>
<dbReference type="GO" id="GO:0003676">
    <property type="term" value="F:nucleic acid binding"/>
    <property type="evidence" value="ECO:0007669"/>
    <property type="project" value="InterPro"/>
</dbReference>
<dbReference type="GO" id="GO:0016430">
    <property type="term" value="F:tRNA (adenine-N6)-methyltransferase activity"/>
    <property type="evidence" value="ECO:0007669"/>
    <property type="project" value="UniProtKB-UniRule"/>
</dbReference>
<dbReference type="GO" id="GO:0032259">
    <property type="term" value="P:methylation"/>
    <property type="evidence" value="ECO:0007669"/>
    <property type="project" value="UniProtKB-KW"/>
</dbReference>
<dbReference type="GO" id="GO:0008033">
    <property type="term" value="P:tRNA processing"/>
    <property type="evidence" value="ECO:0007669"/>
    <property type="project" value="UniProtKB-UniRule"/>
</dbReference>
<dbReference type="CDD" id="cd02440">
    <property type="entry name" value="AdoMet_MTases"/>
    <property type="match status" value="1"/>
</dbReference>
<dbReference type="Gene3D" id="3.40.50.150">
    <property type="entry name" value="Vaccinia Virus protein VP39"/>
    <property type="match status" value="1"/>
</dbReference>
<dbReference type="HAMAP" id="MF_01872">
    <property type="entry name" value="tRNA_methyltr_YfiC"/>
    <property type="match status" value="1"/>
</dbReference>
<dbReference type="InterPro" id="IPR002052">
    <property type="entry name" value="DNA_methylase_N6_adenine_CS"/>
</dbReference>
<dbReference type="InterPro" id="IPR029063">
    <property type="entry name" value="SAM-dependent_MTases_sf"/>
</dbReference>
<dbReference type="InterPro" id="IPR007848">
    <property type="entry name" value="Small_mtfrase_dom"/>
</dbReference>
<dbReference type="InterPro" id="IPR050210">
    <property type="entry name" value="tRNA_Adenine-N(6)_MTase"/>
</dbReference>
<dbReference type="InterPro" id="IPR022882">
    <property type="entry name" value="tRNA_adenine-N6_MeTrfase"/>
</dbReference>
<dbReference type="PANTHER" id="PTHR47739">
    <property type="entry name" value="TRNA1(VAL) (ADENINE(37)-N6)-METHYLTRANSFERASE"/>
    <property type="match status" value="1"/>
</dbReference>
<dbReference type="PANTHER" id="PTHR47739:SF1">
    <property type="entry name" value="TRNA1(VAL) (ADENINE(37)-N6)-METHYLTRANSFERASE"/>
    <property type="match status" value="1"/>
</dbReference>
<dbReference type="Pfam" id="PF05175">
    <property type="entry name" value="MTS"/>
    <property type="match status" value="1"/>
</dbReference>
<dbReference type="SUPFAM" id="SSF53335">
    <property type="entry name" value="S-adenosyl-L-methionine-dependent methyltransferases"/>
    <property type="match status" value="1"/>
</dbReference>
<dbReference type="PROSITE" id="PS00092">
    <property type="entry name" value="N6_MTASE"/>
    <property type="match status" value="1"/>
</dbReference>
<accession>Q15NR8</accession>
<proteinExistence type="inferred from homology"/>
<sequence>MKRQGFQFKQFFIEHQDCAMKVGTDSIMLGSWVTGGDLINASETQRFLDIGTGSGLLAIMLAQKSSEQTHISGIDIDKDAIGQATRNMANSPWSHRLDAQQASVQSFTQNCDNPKFALIISNPPYFNSPILTHEKQAQKRVAARQTSELTHHTLLNNVVRLLAPSGVFYCVLPSDVSQAFIELADPLGLSLIKQLTVFSKPDTNALRELLAFRFNDPSCIRDTISRALTSPEPPTRDTLTIYTQSHQYSDQYKALCKDYYLNF</sequence>
<evidence type="ECO:0000255" key="1">
    <source>
        <dbReference type="HAMAP-Rule" id="MF_01872"/>
    </source>
</evidence>
<feature type="chain" id="PRO_0000387401" description="tRNA1(Val) (adenine(37)-N6)-methyltransferase">
    <location>
        <begin position="1"/>
        <end position="263"/>
    </location>
</feature>
<keyword id="KW-0963">Cytoplasm</keyword>
<keyword id="KW-0489">Methyltransferase</keyword>
<keyword id="KW-0949">S-adenosyl-L-methionine</keyword>
<keyword id="KW-0808">Transferase</keyword>
<keyword id="KW-0819">tRNA processing</keyword>
<gene>
    <name type="ordered locus">Patl_3970</name>
</gene>
<organism>
    <name type="scientific">Pseudoalteromonas atlantica (strain T6c / ATCC BAA-1087)</name>
    <dbReference type="NCBI Taxonomy" id="3042615"/>
    <lineage>
        <taxon>Bacteria</taxon>
        <taxon>Pseudomonadati</taxon>
        <taxon>Pseudomonadota</taxon>
        <taxon>Gammaproteobacteria</taxon>
        <taxon>Alteromonadales</taxon>
        <taxon>Alteromonadaceae</taxon>
        <taxon>Paraglaciecola</taxon>
    </lineage>
</organism>
<comment type="function">
    <text evidence="1">Specifically methylates the adenine in position 37 of tRNA(1)(Val) (anticodon cmo5UAC).</text>
</comment>
<comment type="catalytic activity">
    <reaction evidence="1">
        <text>adenosine(37) in tRNA1(Val) + S-adenosyl-L-methionine = N(6)-methyladenosine(37) in tRNA1(Val) + S-adenosyl-L-homocysteine + H(+)</text>
        <dbReference type="Rhea" id="RHEA:43160"/>
        <dbReference type="Rhea" id="RHEA-COMP:10369"/>
        <dbReference type="Rhea" id="RHEA-COMP:10370"/>
        <dbReference type="ChEBI" id="CHEBI:15378"/>
        <dbReference type="ChEBI" id="CHEBI:57856"/>
        <dbReference type="ChEBI" id="CHEBI:59789"/>
        <dbReference type="ChEBI" id="CHEBI:74411"/>
        <dbReference type="ChEBI" id="CHEBI:74449"/>
        <dbReference type="EC" id="2.1.1.223"/>
    </reaction>
</comment>
<comment type="subcellular location">
    <subcellularLocation>
        <location evidence="1">Cytoplasm</location>
    </subcellularLocation>
</comment>
<comment type="similarity">
    <text evidence="1">Belongs to the methyltransferase superfamily. tRNA (adenine-N(6)-)-methyltransferase family.</text>
</comment>